<protein>
    <recommendedName>
        <fullName evidence="1">ATP synthase subunit b</fullName>
    </recommendedName>
    <alternativeName>
        <fullName evidence="1">ATP synthase F(0) sector subunit b</fullName>
    </alternativeName>
    <alternativeName>
        <fullName evidence="1">ATPase subunit I</fullName>
    </alternativeName>
    <alternativeName>
        <fullName evidence="1">F-type ATPase subunit b</fullName>
        <shortName evidence="1">F-ATPase subunit b</shortName>
    </alternativeName>
</protein>
<reference key="1">
    <citation type="submission" date="2007-11" db="EMBL/GenBank/DDBJ databases">
        <authorList>
            <consortium name="The Salmonella enterica serovar Paratyphi B Genome Sequencing Project"/>
            <person name="McClelland M."/>
            <person name="Sanderson E.K."/>
            <person name="Porwollik S."/>
            <person name="Spieth J."/>
            <person name="Clifton W.S."/>
            <person name="Fulton R."/>
            <person name="Cordes M."/>
            <person name="Wollam A."/>
            <person name="Shah N."/>
            <person name="Pepin K."/>
            <person name="Bhonagiri V."/>
            <person name="Nash W."/>
            <person name="Johnson M."/>
            <person name="Thiruvilangam P."/>
            <person name="Wilson R."/>
        </authorList>
    </citation>
    <scope>NUCLEOTIDE SEQUENCE [LARGE SCALE GENOMIC DNA]</scope>
    <source>
        <strain>ATCC BAA-1250 / SPB7</strain>
    </source>
</reference>
<accession>A9MXB0</accession>
<evidence type="ECO:0000255" key="1">
    <source>
        <dbReference type="HAMAP-Rule" id="MF_01398"/>
    </source>
</evidence>
<keyword id="KW-0066">ATP synthesis</keyword>
<keyword id="KW-0997">Cell inner membrane</keyword>
<keyword id="KW-1003">Cell membrane</keyword>
<keyword id="KW-0138">CF(0)</keyword>
<keyword id="KW-0375">Hydrogen ion transport</keyword>
<keyword id="KW-0406">Ion transport</keyword>
<keyword id="KW-0472">Membrane</keyword>
<keyword id="KW-0812">Transmembrane</keyword>
<keyword id="KW-1133">Transmembrane helix</keyword>
<keyword id="KW-0813">Transport</keyword>
<feature type="chain" id="PRO_0000368748" description="ATP synthase subunit b">
    <location>
        <begin position="1"/>
        <end position="156"/>
    </location>
</feature>
<feature type="transmembrane region" description="Helical" evidence="1">
    <location>
        <begin position="11"/>
        <end position="31"/>
    </location>
</feature>
<organism>
    <name type="scientific">Salmonella paratyphi B (strain ATCC BAA-1250 / SPB7)</name>
    <dbReference type="NCBI Taxonomy" id="1016998"/>
    <lineage>
        <taxon>Bacteria</taxon>
        <taxon>Pseudomonadati</taxon>
        <taxon>Pseudomonadota</taxon>
        <taxon>Gammaproteobacteria</taxon>
        <taxon>Enterobacterales</taxon>
        <taxon>Enterobacteriaceae</taxon>
        <taxon>Salmonella</taxon>
    </lineage>
</organism>
<gene>
    <name evidence="1" type="primary">atpF</name>
    <name type="ordered locus">SPAB_04810</name>
</gene>
<proteinExistence type="inferred from homology"/>
<name>ATPF_SALPB</name>
<dbReference type="EMBL" id="CP000886">
    <property type="protein sequence ID" value="ABX70121.1"/>
    <property type="molecule type" value="Genomic_DNA"/>
</dbReference>
<dbReference type="RefSeq" id="WP_001052212.1">
    <property type="nucleotide sequence ID" value="NC_010102.1"/>
</dbReference>
<dbReference type="BMRB" id="A9MXB0"/>
<dbReference type="SMR" id="A9MXB0"/>
<dbReference type="GeneID" id="66758158"/>
<dbReference type="KEGG" id="spq:SPAB_04810"/>
<dbReference type="PATRIC" id="fig|1016998.12.peg.4525"/>
<dbReference type="HOGENOM" id="CLU_079215_4_5_6"/>
<dbReference type="BioCyc" id="SENT1016998:SPAB_RS19535-MONOMER"/>
<dbReference type="Proteomes" id="UP000008556">
    <property type="component" value="Chromosome"/>
</dbReference>
<dbReference type="GO" id="GO:0005886">
    <property type="term" value="C:plasma membrane"/>
    <property type="evidence" value="ECO:0007669"/>
    <property type="project" value="UniProtKB-SubCell"/>
</dbReference>
<dbReference type="GO" id="GO:0045259">
    <property type="term" value="C:proton-transporting ATP synthase complex"/>
    <property type="evidence" value="ECO:0007669"/>
    <property type="project" value="UniProtKB-KW"/>
</dbReference>
<dbReference type="GO" id="GO:0046933">
    <property type="term" value="F:proton-transporting ATP synthase activity, rotational mechanism"/>
    <property type="evidence" value="ECO:0007669"/>
    <property type="project" value="UniProtKB-UniRule"/>
</dbReference>
<dbReference type="GO" id="GO:0046961">
    <property type="term" value="F:proton-transporting ATPase activity, rotational mechanism"/>
    <property type="evidence" value="ECO:0007669"/>
    <property type="project" value="TreeGrafter"/>
</dbReference>
<dbReference type="CDD" id="cd06503">
    <property type="entry name" value="ATP-synt_Fo_b"/>
    <property type="match status" value="1"/>
</dbReference>
<dbReference type="FunFam" id="1.20.5.620:FF:000001">
    <property type="entry name" value="ATP synthase subunit b"/>
    <property type="match status" value="1"/>
</dbReference>
<dbReference type="Gene3D" id="1.20.5.620">
    <property type="entry name" value="F1F0 ATP synthase subunit B, membrane domain"/>
    <property type="match status" value="1"/>
</dbReference>
<dbReference type="HAMAP" id="MF_01398">
    <property type="entry name" value="ATP_synth_b_bprime"/>
    <property type="match status" value="1"/>
</dbReference>
<dbReference type="InterPro" id="IPR028987">
    <property type="entry name" value="ATP_synth_B-like_membr_sf"/>
</dbReference>
<dbReference type="InterPro" id="IPR002146">
    <property type="entry name" value="ATP_synth_b/b'su_bac/chlpt"/>
</dbReference>
<dbReference type="InterPro" id="IPR005864">
    <property type="entry name" value="ATP_synth_F0_bsu_bac"/>
</dbReference>
<dbReference type="InterPro" id="IPR050059">
    <property type="entry name" value="ATP_synthase_B_chain"/>
</dbReference>
<dbReference type="NCBIfam" id="TIGR01144">
    <property type="entry name" value="ATP_synt_b"/>
    <property type="match status" value="1"/>
</dbReference>
<dbReference type="NCBIfam" id="NF004411">
    <property type="entry name" value="PRK05759.1-2"/>
    <property type="match status" value="1"/>
</dbReference>
<dbReference type="NCBIfam" id="NF004413">
    <property type="entry name" value="PRK05759.1-4"/>
    <property type="match status" value="1"/>
</dbReference>
<dbReference type="PANTHER" id="PTHR33445:SF1">
    <property type="entry name" value="ATP SYNTHASE SUBUNIT B"/>
    <property type="match status" value="1"/>
</dbReference>
<dbReference type="PANTHER" id="PTHR33445">
    <property type="entry name" value="ATP SYNTHASE SUBUNIT B', CHLOROPLASTIC"/>
    <property type="match status" value="1"/>
</dbReference>
<dbReference type="Pfam" id="PF00430">
    <property type="entry name" value="ATP-synt_B"/>
    <property type="match status" value="1"/>
</dbReference>
<dbReference type="SUPFAM" id="SSF81573">
    <property type="entry name" value="F1F0 ATP synthase subunit B, membrane domain"/>
    <property type="match status" value="1"/>
</dbReference>
<comment type="function">
    <text evidence="1">F(1)F(0) ATP synthase produces ATP from ADP in the presence of a proton or sodium gradient. F-type ATPases consist of two structural domains, F(1) containing the extramembraneous catalytic core and F(0) containing the membrane proton channel, linked together by a central stalk and a peripheral stalk. During catalysis, ATP synthesis in the catalytic domain of F(1) is coupled via a rotary mechanism of the central stalk subunits to proton translocation.</text>
</comment>
<comment type="function">
    <text evidence="1">Component of the F(0) channel, it forms part of the peripheral stalk, linking F(1) to F(0).</text>
</comment>
<comment type="subunit">
    <text evidence="1">F-type ATPases have 2 components, F(1) - the catalytic core - and F(0) - the membrane proton channel. F(1) has five subunits: alpha(3), beta(3), gamma(1), delta(1), epsilon(1). F(0) has three main subunits: a(1), b(2) and c(10-14). The alpha and beta chains form an alternating ring which encloses part of the gamma chain. F(1) is attached to F(0) by a central stalk formed by the gamma and epsilon chains, while a peripheral stalk is formed by the delta and b chains.</text>
</comment>
<comment type="subcellular location">
    <subcellularLocation>
        <location evidence="1">Cell inner membrane</location>
        <topology evidence="1">Single-pass membrane protein</topology>
    </subcellularLocation>
</comment>
<comment type="similarity">
    <text evidence="1">Belongs to the ATPase B chain family.</text>
</comment>
<sequence length="156" mass="17365">MNLNATILGQAIAFILFVWFCMKYVWPPLMAAIEKRQKEIADGLASAERAHKDLDLAKASATDQLKKAKAEAQVIIEQANKRRAQILDEAKTEAEQERTKIVAQAQAEIEAERKRAREELRKQVAILAVAGAEKIIERSVDEAANSDIVDKLVAEL</sequence>